<keyword id="KW-0963">Cytoplasm</keyword>
<keyword id="KW-0456">Lyase</keyword>
<keyword id="KW-0670">Pyruvate</keyword>
<keyword id="KW-0831">Ubiquinone biosynthesis</keyword>
<organism>
    <name type="scientific">Burkholderia pseudomallei (strain 1710b)</name>
    <dbReference type="NCBI Taxonomy" id="320372"/>
    <lineage>
        <taxon>Bacteria</taxon>
        <taxon>Pseudomonadati</taxon>
        <taxon>Pseudomonadota</taxon>
        <taxon>Betaproteobacteria</taxon>
        <taxon>Burkholderiales</taxon>
        <taxon>Burkholderiaceae</taxon>
        <taxon>Burkholderia</taxon>
        <taxon>pseudomallei group</taxon>
    </lineage>
</organism>
<name>UBIC1_BURP1</name>
<dbReference type="EC" id="4.1.3.40" evidence="1"/>
<dbReference type="EMBL" id="CP000125">
    <property type="protein sequence ID" value="ABA51190.1"/>
    <property type="molecule type" value="Genomic_DNA"/>
</dbReference>
<dbReference type="RefSeq" id="WP_004529335.1">
    <property type="nucleotide sequence ID" value="NC_007435.1"/>
</dbReference>
<dbReference type="SMR" id="Q3JJ81"/>
<dbReference type="EnsemblBacteria" id="ABA51190">
    <property type="protein sequence ID" value="ABA51190"/>
    <property type="gene ID" value="BURPS1710b_A1215"/>
</dbReference>
<dbReference type="KEGG" id="bpm:BURPS1710b_A1215"/>
<dbReference type="HOGENOM" id="CLU_096824_0_0_4"/>
<dbReference type="UniPathway" id="UPA00232"/>
<dbReference type="Proteomes" id="UP000002700">
    <property type="component" value="Chromosome II"/>
</dbReference>
<dbReference type="GO" id="GO:0005829">
    <property type="term" value="C:cytosol"/>
    <property type="evidence" value="ECO:0007669"/>
    <property type="project" value="TreeGrafter"/>
</dbReference>
<dbReference type="GO" id="GO:0008813">
    <property type="term" value="F:chorismate lyase activity"/>
    <property type="evidence" value="ECO:0007669"/>
    <property type="project" value="UniProtKB-UniRule"/>
</dbReference>
<dbReference type="GO" id="GO:0042866">
    <property type="term" value="P:pyruvate biosynthetic process"/>
    <property type="evidence" value="ECO:0007669"/>
    <property type="project" value="UniProtKB-UniRule"/>
</dbReference>
<dbReference type="GO" id="GO:0006744">
    <property type="term" value="P:ubiquinone biosynthetic process"/>
    <property type="evidence" value="ECO:0007669"/>
    <property type="project" value="UniProtKB-UniRule"/>
</dbReference>
<dbReference type="Gene3D" id="3.40.1410.10">
    <property type="entry name" value="Chorismate lyase-like"/>
    <property type="match status" value="1"/>
</dbReference>
<dbReference type="HAMAP" id="MF_01632">
    <property type="entry name" value="UbiC"/>
    <property type="match status" value="1"/>
</dbReference>
<dbReference type="InterPro" id="IPR007440">
    <property type="entry name" value="Chorismate--pyruvate_lyase"/>
</dbReference>
<dbReference type="InterPro" id="IPR028978">
    <property type="entry name" value="Chorismate_lyase_/UTRA_dom_sf"/>
</dbReference>
<dbReference type="PANTHER" id="PTHR38683">
    <property type="entry name" value="CHORISMATE PYRUVATE-LYASE"/>
    <property type="match status" value="1"/>
</dbReference>
<dbReference type="PANTHER" id="PTHR38683:SF1">
    <property type="entry name" value="CHORISMATE PYRUVATE-LYASE"/>
    <property type="match status" value="1"/>
</dbReference>
<dbReference type="Pfam" id="PF04345">
    <property type="entry name" value="Chor_lyase"/>
    <property type="match status" value="1"/>
</dbReference>
<dbReference type="SUPFAM" id="SSF64288">
    <property type="entry name" value="Chorismate lyase-like"/>
    <property type="match status" value="1"/>
</dbReference>
<proteinExistence type="inferred from homology"/>
<feature type="chain" id="PRO_0000240539" description="Probable chorismate pyruvate-lyase 1">
    <location>
        <begin position="1"/>
        <end position="184"/>
    </location>
</feature>
<feature type="binding site" evidence="1">
    <location>
        <position position="70"/>
    </location>
    <ligand>
        <name>substrate</name>
    </ligand>
</feature>
<feature type="binding site" evidence="1">
    <location>
        <position position="108"/>
    </location>
    <ligand>
        <name>substrate</name>
    </ligand>
</feature>
<feature type="binding site" evidence="1">
    <location>
        <position position="166"/>
    </location>
    <ligand>
        <name>substrate</name>
    </ligand>
</feature>
<accession>Q3JJ81</accession>
<reference key="1">
    <citation type="journal article" date="2010" name="Genome Biol. Evol.">
        <title>Continuing evolution of Burkholderia mallei through genome reduction and large-scale rearrangements.</title>
        <authorList>
            <person name="Losada L."/>
            <person name="Ronning C.M."/>
            <person name="DeShazer D."/>
            <person name="Woods D."/>
            <person name="Fedorova N."/>
            <person name="Kim H.S."/>
            <person name="Shabalina S.A."/>
            <person name="Pearson T.R."/>
            <person name="Brinkac L."/>
            <person name="Tan P."/>
            <person name="Nandi T."/>
            <person name="Crabtree J."/>
            <person name="Badger J."/>
            <person name="Beckstrom-Sternberg S."/>
            <person name="Saqib M."/>
            <person name="Schutzer S.E."/>
            <person name="Keim P."/>
            <person name="Nierman W.C."/>
        </authorList>
    </citation>
    <scope>NUCLEOTIDE SEQUENCE [LARGE SCALE GENOMIC DNA]</scope>
    <source>
        <strain>1710b</strain>
    </source>
</reference>
<gene>
    <name evidence="1" type="primary">ubiC1</name>
    <name type="ordered locus">BURPS1710b_A1215</name>
</gene>
<protein>
    <recommendedName>
        <fullName evidence="1">Probable chorismate pyruvate-lyase 1</fullName>
        <shortName evidence="1">CL 1</shortName>
        <shortName evidence="1">CPL 1</shortName>
        <ecNumber evidence="1">4.1.3.40</ecNumber>
    </recommendedName>
</protein>
<sequence>MNTSSGWSRQPPASLSELEIHWLFAPGSLTERLSALGEYSLEPVDQRHAAACAADASLLGVEPDSPIWVREVVMRLDAQPCVTARSIASAHALETQWKPLTGYGSLPLGHILYDDPAIVRAPFECALLMPDDPLDAISRRYARAAAPPRARRSAFVRNGATLVVSECFLPQFWSGFAQARLAGA</sequence>
<evidence type="ECO:0000255" key="1">
    <source>
        <dbReference type="HAMAP-Rule" id="MF_01632"/>
    </source>
</evidence>
<comment type="function">
    <text evidence="1">Removes the pyruvyl group from chorismate, with concomitant aromatization of the ring, to provide 4-hydroxybenzoate (4HB) for the ubiquinone pathway.</text>
</comment>
<comment type="catalytic activity">
    <reaction evidence="1">
        <text>chorismate = 4-hydroxybenzoate + pyruvate</text>
        <dbReference type="Rhea" id="RHEA:16505"/>
        <dbReference type="ChEBI" id="CHEBI:15361"/>
        <dbReference type="ChEBI" id="CHEBI:17879"/>
        <dbReference type="ChEBI" id="CHEBI:29748"/>
        <dbReference type="EC" id="4.1.3.40"/>
    </reaction>
</comment>
<comment type="pathway">
    <text evidence="1">Cofactor biosynthesis; ubiquinone biosynthesis.</text>
</comment>
<comment type="subcellular location">
    <subcellularLocation>
        <location evidence="1">Cytoplasm</location>
    </subcellularLocation>
</comment>
<comment type="similarity">
    <text evidence="1">Belongs to the UbiC family.</text>
</comment>